<gene>
    <name type="primary">guaAB</name>
    <name type="ordered locus">MTH_710</name>
</gene>
<organism>
    <name type="scientific">Methanothermobacter thermautotrophicus (strain ATCC 29096 / DSM 1053 / JCM 10044 / NBRC 100330 / Delta H)</name>
    <name type="common">Methanobacterium thermoautotrophicum</name>
    <dbReference type="NCBI Taxonomy" id="187420"/>
    <lineage>
        <taxon>Archaea</taxon>
        <taxon>Methanobacteriati</taxon>
        <taxon>Methanobacteriota</taxon>
        <taxon>Methanomada group</taxon>
        <taxon>Methanobacteria</taxon>
        <taxon>Methanobacteriales</taxon>
        <taxon>Methanobacteriaceae</taxon>
        <taxon>Methanothermobacter</taxon>
    </lineage>
</organism>
<evidence type="ECO:0000250" key="1"/>
<evidence type="ECO:0000305" key="2"/>
<name>GUAAB_METTH</name>
<dbReference type="EC" id="6.3.5.2"/>
<dbReference type="EMBL" id="AE000666">
    <property type="protein sequence ID" value="AAB85215.1"/>
    <property type="status" value="ALT_INIT"/>
    <property type="molecule type" value="Genomic_DNA"/>
</dbReference>
<dbReference type="PIR" id="H69194">
    <property type="entry name" value="H69194"/>
</dbReference>
<dbReference type="SMR" id="O26806"/>
<dbReference type="FunCoup" id="O26806">
    <property type="interactions" value="201"/>
</dbReference>
<dbReference type="STRING" id="187420.MTH_710"/>
<dbReference type="PaxDb" id="187420-MTH_710"/>
<dbReference type="EnsemblBacteria" id="AAB85215">
    <property type="protein sequence ID" value="AAB85215"/>
    <property type="gene ID" value="MTH_710"/>
</dbReference>
<dbReference type="KEGG" id="mth:MTH_710"/>
<dbReference type="PATRIC" id="fig|187420.15.peg.694"/>
<dbReference type="HOGENOM" id="CLU_014340_0_0_2"/>
<dbReference type="InParanoid" id="O26806"/>
<dbReference type="UniPathway" id="UPA00189">
    <property type="reaction ID" value="UER00296"/>
</dbReference>
<dbReference type="Proteomes" id="UP000005223">
    <property type="component" value="Chromosome"/>
</dbReference>
<dbReference type="GO" id="GO:0005829">
    <property type="term" value="C:cytosol"/>
    <property type="evidence" value="ECO:0007669"/>
    <property type="project" value="TreeGrafter"/>
</dbReference>
<dbReference type="GO" id="GO:0005524">
    <property type="term" value="F:ATP binding"/>
    <property type="evidence" value="ECO:0007669"/>
    <property type="project" value="UniProtKB-UniRule"/>
</dbReference>
<dbReference type="GO" id="GO:0003921">
    <property type="term" value="F:GMP synthase activity"/>
    <property type="evidence" value="ECO:0007669"/>
    <property type="project" value="InterPro"/>
</dbReference>
<dbReference type="CDD" id="cd01997">
    <property type="entry name" value="GMP_synthase_C"/>
    <property type="match status" value="1"/>
</dbReference>
<dbReference type="FunFam" id="3.30.300.10:FF:000002">
    <property type="entry name" value="GMP synthase [glutamine-hydrolyzing]"/>
    <property type="match status" value="1"/>
</dbReference>
<dbReference type="Gene3D" id="3.30.300.10">
    <property type="match status" value="1"/>
</dbReference>
<dbReference type="Gene3D" id="3.40.50.620">
    <property type="entry name" value="HUPs"/>
    <property type="match status" value="1"/>
</dbReference>
<dbReference type="HAMAP" id="MF_00345">
    <property type="entry name" value="GMP_synthase_B"/>
    <property type="match status" value="1"/>
</dbReference>
<dbReference type="InterPro" id="IPR001674">
    <property type="entry name" value="GMP_synth_C"/>
</dbReference>
<dbReference type="InterPro" id="IPR026598">
    <property type="entry name" value="GMP_synthase_B"/>
</dbReference>
<dbReference type="InterPro" id="IPR025777">
    <property type="entry name" value="GMPS_ATP_PPase_dom"/>
</dbReference>
<dbReference type="InterPro" id="IPR022310">
    <property type="entry name" value="NAD/GMP_synthase"/>
</dbReference>
<dbReference type="InterPro" id="IPR014729">
    <property type="entry name" value="Rossmann-like_a/b/a_fold"/>
</dbReference>
<dbReference type="NCBIfam" id="TIGR00884">
    <property type="entry name" value="guaA_Cterm"/>
    <property type="match status" value="1"/>
</dbReference>
<dbReference type="PANTHER" id="PTHR11922:SF2">
    <property type="entry name" value="GMP SYNTHASE [GLUTAMINE-HYDROLYZING]"/>
    <property type="match status" value="1"/>
</dbReference>
<dbReference type="PANTHER" id="PTHR11922">
    <property type="entry name" value="GMP SYNTHASE-RELATED"/>
    <property type="match status" value="1"/>
</dbReference>
<dbReference type="Pfam" id="PF00958">
    <property type="entry name" value="GMP_synt_C"/>
    <property type="match status" value="1"/>
</dbReference>
<dbReference type="Pfam" id="PF02540">
    <property type="entry name" value="NAD_synthase"/>
    <property type="match status" value="1"/>
</dbReference>
<dbReference type="SUPFAM" id="SSF52402">
    <property type="entry name" value="Adenine nucleotide alpha hydrolases-like"/>
    <property type="match status" value="1"/>
</dbReference>
<dbReference type="PROSITE" id="PS51553">
    <property type="entry name" value="GMPS_ATP_PPASE"/>
    <property type="match status" value="1"/>
</dbReference>
<reference key="1">
    <citation type="journal article" date="1997" name="J. Bacteriol.">
        <title>Complete genome sequence of Methanobacterium thermoautotrophicum deltaH: functional analysis and comparative genomics.</title>
        <authorList>
            <person name="Smith D.R."/>
            <person name="Doucette-Stamm L.A."/>
            <person name="Deloughery C."/>
            <person name="Lee H.-M."/>
            <person name="Dubois J."/>
            <person name="Aldredge T."/>
            <person name="Bashirzadeh R."/>
            <person name="Blakely D."/>
            <person name="Cook R."/>
            <person name="Gilbert K."/>
            <person name="Harrison D."/>
            <person name="Hoang L."/>
            <person name="Keagle P."/>
            <person name="Lumm W."/>
            <person name="Pothier B."/>
            <person name="Qiu D."/>
            <person name="Spadafora R."/>
            <person name="Vicare R."/>
            <person name="Wang Y."/>
            <person name="Wierzbowski J."/>
            <person name="Gibson R."/>
            <person name="Jiwani N."/>
            <person name="Caruso A."/>
            <person name="Bush D."/>
            <person name="Safer H."/>
            <person name="Patwell D."/>
            <person name="Prabhakar S."/>
            <person name="McDougall S."/>
            <person name="Shimer G."/>
            <person name="Goyal A."/>
            <person name="Pietrovski S."/>
            <person name="Church G.M."/>
            <person name="Daniels C.J."/>
            <person name="Mao J.-I."/>
            <person name="Rice P."/>
            <person name="Noelling J."/>
            <person name="Reeve J.N."/>
        </authorList>
    </citation>
    <scope>NUCLEOTIDE SEQUENCE [LARGE SCALE GENOMIC DNA]</scope>
    <source>
        <strain>ATCC 29096 / DSM 1053 / JCM 10044 / NBRC 100330 / Delta H</strain>
    </source>
</reference>
<comment type="function">
    <text evidence="1">Catalyzes the synthesis of GMP from XMP.</text>
</comment>
<comment type="catalytic activity">
    <reaction>
        <text>XMP + L-glutamine + ATP + H2O = GMP + L-glutamate + AMP + diphosphate + 2 H(+)</text>
        <dbReference type="Rhea" id="RHEA:11680"/>
        <dbReference type="ChEBI" id="CHEBI:15377"/>
        <dbReference type="ChEBI" id="CHEBI:15378"/>
        <dbReference type="ChEBI" id="CHEBI:29985"/>
        <dbReference type="ChEBI" id="CHEBI:30616"/>
        <dbReference type="ChEBI" id="CHEBI:33019"/>
        <dbReference type="ChEBI" id="CHEBI:57464"/>
        <dbReference type="ChEBI" id="CHEBI:58115"/>
        <dbReference type="ChEBI" id="CHEBI:58359"/>
        <dbReference type="ChEBI" id="CHEBI:456215"/>
        <dbReference type="EC" id="6.3.5.2"/>
    </reaction>
</comment>
<comment type="pathway">
    <text>Purine metabolism; GMP biosynthesis; GMP from XMP (L-Gln route): step 1/1.</text>
</comment>
<comment type="subunit">
    <text evidence="2">Heterodimer composed of a glutamine amidotransferase subunit (A) and a GMP-binding subunit (B).</text>
</comment>
<comment type="sequence caution" evidence="2">
    <conflict type="erroneous initiation">
        <sequence resource="EMBL-CDS" id="AAB85215"/>
    </conflict>
</comment>
<feature type="chain" id="PRO_0000140245" description="GMP synthase [glutamine-hydrolyzing] subunit B">
    <location>
        <begin position="1"/>
        <end position="308"/>
    </location>
</feature>
<feature type="domain" description="GMPS ATP-PPase">
    <location>
        <begin position="2"/>
        <end position="183"/>
    </location>
</feature>
<feature type="binding site" evidence="1">
    <location>
        <begin position="29"/>
        <end position="35"/>
    </location>
    <ligand>
        <name>ATP</name>
        <dbReference type="ChEBI" id="CHEBI:30616"/>
    </ligand>
</feature>
<keyword id="KW-0067">ATP-binding</keyword>
<keyword id="KW-0332">GMP biosynthesis</keyword>
<keyword id="KW-0436">Ligase</keyword>
<keyword id="KW-0547">Nucleotide-binding</keyword>
<keyword id="KW-0658">Purine biosynthesis</keyword>
<keyword id="KW-1185">Reference proteome</keyword>
<sequence>MLNPSDFIEEAVEEIRSTVGNEKAIIALSGGVDSSVASVLAGRAIGDNLTAVFVDHGLLREGEAEYVRKTFSERLNFRYIDASEEFLKELEGVTDPEEKRKIIGRVFIEVFERVAEEIGARYLVQGTIAPDWIESEGQIKSHHNVALPHGLVLEIVEPIRELYKDEVREIGLELGLPREMIQRQPFPGPGLAVRIVGEITREKIEICRRANAIVEEEVVESGLHESLWQYFAVLTDTMVTGVKGDVRDFGYLVVIRMVESLDAMTASVPELPWDLIKRISKRITAEIPEVTHVALSVSDKPPSTIEFA</sequence>
<protein>
    <recommendedName>
        <fullName>GMP synthase [glutamine-hydrolyzing] subunit B</fullName>
        <ecNumber>6.3.5.2</ecNumber>
    </recommendedName>
    <alternativeName>
        <fullName>GMP synthetase</fullName>
    </alternativeName>
</protein>
<accession>O26806</accession>
<proteinExistence type="inferred from homology"/>